<protein>
    <recommendedName>
        <fullName>Oncostatin-M-specific receptor subunit beta</fullName>
    </recommendedName>
    <alternativeName>
        <fullName>Interleukin-31 receptor subunit beta</fullName>
        <shortName>IL-31 receptor subunit beta</shortName>
        <shortName>IL-31R subunit beta</shortName>
        <shortName>IL-31R-beta</shortName>
        <shortName>IL-31RB</shortName>
    </alternativeName>
</protein>
<sequence>MAFSVVLHQVTFLLAVLSLRTSQSKVLGEPLQLTPEIHTVSLQSALQEANLEWTVPTFSHQELNIVFQIEISRMRTSNTIWVGNYSTTVKHEETVHWKWTSDIPLECATHFIRIRAMVDDAQYPPQSSWSNWSSWKEVNAQVSVPPDTLLIFPEDRLLEEGSNVTICLMIGQNLYNVSCKLQEEPIRGEQLDSHLSLIKLNNVVFLNNAGTNINCKAMNGTKNTFGTVLFVSKVLEEPKNFSCETRDFKTLNCLWEPGIDTTLSWHKQRSQHYTLYESFSGRREVSNHRNSHTWQITEDSQETYNFTLTAENNLRKRSVSISFNLTHRVHPKAPHDVTLKTVGATKAHMTWKVPSRGDYTLLCQVELQCEGEVIHEHNVSVHTSANYLFSDLEPDTEYKACVRCASANHFWKWSDWMQKKFRTPEAAPSEALDVWRDVRTENGRHVVTLFWKPLLKSQANGKIISYNIVVENEANPTESEQYSVRAPALGTNLSLDLHPYKIHISANNSAGASPESLVVLSSHSGHEEVHEKTIKGIKNGFNISWEPVSGDAIGYVVDWCAHSQTQRCDLQWKNVGPNITSTIITSDAFEPGVRYNFRIFERSVEENVRLVEKQRGYTQELAPSVNPGVTIHNLTPNSFSLKWQDYASDFQSGFIKGYLVYLKSKELQCNPNWERTVLSDKSVLCKYDVDDPETKTLTVENLRPESLYEFLVTPYTSAGQGPNETYTKVTTPDVRSHMLLQIILPMTLGVFLSIIVCYWKSQWVKEKCYPDIPNPYKSSILSLIKSKKNPHLIMNVKDCIPDVLEVINKAEGSKTQCVGSGKLHTEDVPTKPPLVPTEKDSSGPMPFVFLENFTYDQSAFDSGSHGFIPGPLKNTPHQLGLLAPPNKLQNVLENDYMKSLVESPTEETSLIYVSQLASPICGDKDSLVTNPPMPVHGSEYKKQMALPGSLTSASLKENNLTS</sequence>
<evidence type="ECO:0000250" key="1"/>
<evidence type="ECO:0000255" key="2"/>
<evidence type="ECO:0000255" key="3">
    <source>
        <dbReference type="PROSITE-ProRule" id="PRU00316"/>
    </source>
</evidence>
<evidence type="ECO:0000256" key="4">
    <source>
        <dbReference type="SAM" id="MobiDB-lite"/>
    </source>
</evidence>
<evidence type="ECO:0000269" key="5">
    <source>
    </source>
</evidence>
<evidence type="ECO:0000305" key="6"/>
<organism>
    <name type="scientific">Rattus norvegicus</name>
    <name type="common">Rat</name>
    <dbReference type="NCBI Taxonomy" id="10116"/>
    <lineage>
        <taxon>Eukaryota</taxon>
        <taxon>Metazoa</taxon>
        <taxon>Chordata</taxon>
        <taxon>Craniata</taxon>
        <taxon>Vertebrata</taxon>
        <taxon>Euteleostomi</taxon>
        <taxon>Mammalia</taxon>
        <taxon>Eutheria</taxon>
        <taxon>Euarchontoglires</taxon>
        <taxon>Glires</taxon>
        <taxon>Rodentia</taxon>
        <taxon>Myomorpha</taxon>
        <taxon>Muroidea</taxon>
        <taxon>Muridae</taxon>
        <taxon>Murinae</taxon>
        <taxon>Rattus</taxon>
    </lineage>
</organism>
<reference key="1">
    <citation type="journal article" date="2005" name="Am. J. Pathol.">
        <title>Oncostatin M inhibits proliferation of rat oval cells, OC15-5, inducing differentiation into hepatocytes.</title>
        <authorList>
            <person name="Okaya A."/>
            <person name="Kitanaka J."/>
            <person name="Kitanaka N."/>
            <person name="Satake M."/>
            <person name="Kim Y."/>
            <person name="Terada K."/>
            <person name="Sugiyama T."/>
            <person name="Takemura M."/>
            <person name="Fujimoto J."/>
            <person name="Terada N."/>
            <person name="Miyajima A."/>
            <person name="Tsujimura T."/>
        </authorList>
    </citation>
    <scope>NUCLEOTIDE SEQUENCE [MRNA]</scope>
    <scope>FUNCTION</scope>
    <scope>TISSUE SPECIFICITY</scope>
</reference>
<proteinExistence type="evidence at transcript level"/>
<accession>Q65Z14</accession>
<feature type="signal peptide" evidence="2">
    <location>
        <begin position="1"/>
        <end position="28"/>
    </location>
</feature>
<feature type="chain" id="PRO_0000259761" description="Oncostatin-M-specific receptor subunit beta">
    <location>
        <begin position="29"/>
        <end position="962"/>
    </location>
</feature>
<feature type="topological domain" description="Extracellular" evidence="2">
    <location>
        <begin position="29"/>
        <end position="738"/>
    </location>
</feature>
<feature type="transmembrane region" description="Helical" evidence="2">
    <location>
        <begin position="739"/>
        <end position="759"/>
    </location>
</feature>
<feature type="topological domain" description="Cytoplasmic" evidence="2">
    <location>
        <begin position="760"/>
        <end position="962"/>
    </location>
</feature>
<feature type="domain" description="Fibronectin type-III 1" evidence="3">
    <location>
        <begin position="237"/>
        <end position="332"/>
    </location>
</feature>
<feature type="domain" description="Fibronectin type-III 2" evidence="3">
    <location>
        <begin position="333"/>
        <end position="426"/>
    </location>
</feature>
<feature type="domain" description="Fibronectin type-III 3" evidence="3">
    <location>
        <begin position="428"/>
        <end position="527"/>
    </location>
</feature>
<feature type="domain" description="Fibronectin type-III 4" evidence="3">
    <location>
        <begin position="528"/>
        <end position="621"/>
    </location>
</feature>
<feature type="domain" description="Fibronectin type-III 5" evidence="3">
    <location>
        <begin position="623"/>
        <end position="734"/>
    </location>
</feature>
<feature type="region of interest" description="Disordered" evidence="4">
    <location>
        <begin position="818"/>
        <end position="840"/>
    </location>
</feature>
<feature type="short sequence motif" description="WSXWS motif" evidence="1">
    <location>
        <begin position="413"/>
        <end position="417"/>
    </location>
</feature>
<feature type="short sequence motif" description="Box 1 motif" evidence="1">
    <location>
        <begin position="768"/>
        <end position="776"/>
    </location>
</feature>
<feature type="glycosylation site" description="N-linked (GlcNAc...) asparagine" evidence="2">
    <location>
        <position position="219"/>
    </location>
</feature>
<feature type="glycosylation site" description="N-linked (GlcNAc...) asparagine" evidence="2">
    <location>
        <position position="324"/>
    </location>
</feature>
<feature type="glycosylation site" description="N-linked (GlcNAc...) asparagine" evidence="2">
    <location>
        <position position="492"/>
    </location>
</feature>
<feature type="glycosylation site" description="N-linked (GlcNAc...) asparagine" evidence="2">
    <location>
        <position position="578"/>
    </location>
</feature>
<feature type="glycosylation site" description="N-linked (GlcNAc...) asparagine" evidence="2">
    <location>
        <position position="723"/>
    </location>
</feature>
<feature type="disulfide bond" evidence="1">
    <location>
        <begin position="243"/>
        <end position="253"/>
    </location>
</feature>
<keyword id="KW-1015">Disulfide bond</keyword>
<keyword id="KW-0325">Glycoprotein</keyword>
<keyword id="KW-0472">Membrane</keyword>
<keyword id="KW-0675">Receptor</keyword>
<keyword id="KW-1185">Reference proteome</keyword>
<keyword id="KW-0677">Repeat</keyword>
<keyword id="KW-0732">Signal</keyword>
<keyword id="KW-0812">Transmembrane</keyword>
<keyword id="KW-1133">Transmembrane helix</keyword>
<comment type="function">
    <text evidence="1 5">Associates with IL31RA to form the IL31 receptor. Binds IL31 and activates STAT1, STAT3 and STAT5. Capable of transducing OSM-specific signaling events (By similarity). The OSM/OSM-R system is pivotal in the differentiation of oval cells into hepatocytes, thereby promoting liver regeneration.</text>
</comment>
<comment type="subunit">
    <text evidence="1">Heterodimer composed of OSMR and IL6ST (type II OSM receptor). Heterodimer with IL31RA to form the IL31 receptor (By similarity).</text>
</comment>
<comment type="subcellular location">
    <subcellularLocation>
        <location evidence="6">Membrane</location>
        <topology evidence="6">Single-pass type I membrane protein</topology>
    </subcellularLocation>
</comment>
<comment type="tissue specificity">
    <text evidence="5">Widely expressed. Expressed at high levels in the liver, skin and spleen. In the liver it is expressed exclusively in the oval cells.</text>
</comment>
<comment type="domain">
    <text evidence="1">The WSXWS motif appears to be necessary for proper protein folding and thereby efficient intracellular transport and cell-surface receptor binding.</text>
</comment>
<comment type="domain">
    <text evidence="1">The box 1 motif is required for JAK interaction and/or activation.</text>
</comment>
<comment type="similarity">
    <text evidence="6">Belongs to the type I cytokine receptor family. Type 2 subfamily.</text>
</comment>
<dbReference type="EMBL" id="AB167522">
    <property type="protein sequence ID" value="BAD44758.1"/>
    <property type="molecule type" value="mRNA"/>
</dbReference>
<dbReference type="RefSeq" id="NP_001005384.1">
    <property type="nucleotide sequence ID" value="NM_001005384.1"/>
</dbReference>
<dbReference type="SMR" id="Q65Z14"/>
<dbReference type="FunCoup" id="Q65Z14">
    <property type="interactions" value="214"/>
</dbReference>
<dbReference type="STRING" id="10116.ENSRNOP00000039644"/>
<dbReference type="GlyCosmos" id="Q65Z14">
    <property type="glycosylation" value="5 sites, No reported glycans"/>
</dbReference>
<dbReference type="GlyGen" id="Q65Z14">
    <property type="glycosylation" value="5 sites"/>
</dbReference>
<dbReference type="PhosphoSitePlus" id="Q65Z14"/>
<dbReference type="SwissPalm" id="Q65Z14"/>
<dbReference type="PaxDb" id="10116-ENSRNOP00000039644"/>
<dbReference type="GeneID" id="310132"/>
<dbReference type="KEGG" id="rno:310132"/>
<dbReference type="UCSC" id="RGD:1302983">
    <property type="organism name" value="rat"/>
</dbReference>
<dbReference type="AGR" id="RGD:1302983"/>
<dbReference type="CTD" id="9180"/>
<dbReference type="RGD" id="1302983">
    <property type="gene designation" value="Osmr"/>
</dbReference>
<dbReference type="eggNOG" id="ENOG502QWRV">
    <property type="taxonomic scope" value="Eukaryota"/>
</dbReference>
<dbReference type="InParanoid" id="Q65Z14"/>
<dbReference type="PhylomeDB" id="Q65Z14"/>
<dbReference type="Reactome" id="R-RNO-6788467">
    <property type="pathway name" value="IL-6-type cytokine receptor ligand interactions"/>
</dbReference>
<dbReference type="PRO" id="PR:Q65Z14"/>
<dbReference type="Proteomes" id="UP000002494">
    <property type="component" value="Unplaced"/>
</dbReference>
<dbReference type="GO" id="GO:0016324">
    <property type="term" value="C:apical plasma membrane"/>
    <property type="evidence" value="ECO:0000266"/>
    <property type="project" value="RGD"/>
</dbReference>
<dbReference type="GO" id="GO:0009897">
    <property type="term" value="C:external side of plasma membrane"/>
    <property type="evidence" value="ECO:0000266"/>
    <property type="project" value="RGD"/>
</dbReference>
<dbReference type="GO" id="GO:0005900">
    <property type="term" value="C:oncostatin-M receptor complex"/>
    <property type="evidence" value="ECO:0000266"/>
    <property type="project" value="RGD"/>
</dbReference>
<dbReference type="GO" id="GO:0043235">
    <property type="term" value="C:receptor complex"/>
    <property type="evidence" value="ECO:0000318"/>
    <property type="project" value="GO_Central"/>
</dbReference>
<dbReference type="GO" id="GO:0005127">
    <property type="term" value="F:ciliary neurotrophic factor receptor binding"/>
    <property type="evidence" value="ECO:0000318"/>
    <property type="project" value="GO_Central"/>
</dbReference>
<dbReference type="GO" id="GO:0019955">
    <property type="term" value="F:cytokine binding"/>
    <property type="evidence" value="ECO:0000266"/>
    <property type="project" value="RGD"/>
</dbReference>
<dbReference type="GO" id="GO:0004896">
    <property type="term" value="F:cytokine receptor activity"/>
    <property type="evidence" value="ECO:0000318"/>
    <property type="project" value="GO_Central"/>
</dbReference>
<dbReference type="GO" id="GO:0019838">
    <property type="term" value="F:growth factor binding"/>
    <property type="evidence" value="ECO:0000266"/>
    <property type="project" value="RGD"/>
</dbReference>
<dbReference type="GO" id="GO:0004924">
    <property type="term" value="F:oncostatin-M receptor activity"/>
    <property type="evidence" value="ECO:0000266"/>
    <property type="project" value="RGD"/>
</dbReference>
<dbReference type="GO" id="GO:0019221">
    <property type="term" value="P:cytokine-mediated signaling pathway"/>
    <property type="evidence" value="ECO:0000318"/>
    <property type="project" value="GO_Central"/>
</dbReference>
<dbReference type="GO" id="GO:0038165">
    <property type="term" value="P:oncostatin-M-mediated signaling pathway"/>
    <property type="evidence" value="ECO:0000266"/>
    <property type="project" value="RGD"/>
</dbReference>
<dbReference type="GO" id="GO:0008284">
    <property type="term" value="P:positive regulation of cell population proliferation"/>
    <property type="evidence" value="ECO:0000266"/>
    <property type="project" value="RGD"/>
</dbReference>
<dbReference type="GO" id="GO:0034097">
    <property type="term" value="P:response to cytokine"/>
    <property type="evidence" value="ECO:0000266"/>
    <property type="project" value="RGD"/>
</dbReference>
<dbReference type="CDD" id="cd00063">
    <property type="entry name" value="FN3"/>
    <property type="match status" value="3"/>
</dbReference>
<dbReference type="FunFam" id="2.60.40.10:FF:000578">
    <property type="entry name" value="Leukemia inhibitory factor receptor"/>
    <property type="match status" value="1"/>
</dbReference>
<dbReference type="FunFam" id="2.60.40.10:FF:000607">
    <property type="entry name" value="Leukemia inhibitory factor receptor"/>
    <property type="match status" value="1"/>
</dbReference>
<dbReference type="FunFam" id="2.60.40.10:FF:000657">
    <property type="entry name" value="Leukemia inhibitory factor receptor"/>
    <property type="match status" value="1"/>
</dbReference>
<dbReference type="FunFam" id="2.60.40.10:FF:000738">
    <property type="entry name" value="Leukemia inhibitory factor receptor"/>
    <property type="match status" value="1"/>
</dbReference>
<dbReference type="FunFam" id="2.60.40.10:FF:001286">
    <property type="entry name" value="Oncostatin-M-specific receptor subunit beta"/>
    <property type="match status" value="1"/>
</dbReference>
<dbReference type="FunFam" id="2.60.40.10:FF:001289">
    <property type="entry name" value="Oncostatin-M-specific receptor subunit beta"/>
    <property type="match status" value="1"/>
</dbReference>
<dbReference type="FunFam" id="2.60.40.10:FF:001148">
    <property type="entry name" value="oncostatin-M-specific receptor subunit beta"/>
    <property type="match status" value="1"/>
</dbReference>
<dbReference type="Gene3D" id="2.60.40.10">
    <property type="entry name" value="Immunoglobulins"/>
    <property type="match status" value="7"/>
</dbReference>
<dbReference type="InterPro" id="IPR003961">
    <property type="entry name" value="FN3_dom"/>
</dbReference>
<dbReference type="InterPro" id="IPR036116">
    <property type="entry name" value="FN3_sf"/>
</dbReference>
<dbReference type="InterPro" id="IPR003529">
    <property type="entry name" value="Hematopoietin_rcpt_Gp130_CS"/>
</dbReference>
<dbReference type="InterPro" id="IPR013783">
    <property type="entry name" value="Ig-like_fold"/>
</dbReference>
<dbReference type="InterPro" id="IPR048497">
    <property type="entry name" value="LIF-R-like_Ig-like"/>
</dbReference>
<dbReference type="InterPro" id="IPR040817">
    <property type="entry name" value="LIFR_D2"/>
</dbReference>
<dbReference type="InterPro" id="IPR052672">
    <property type="entry name" value="Type1_Cytokine_Rcpt_Type2"/>
</dbReference>
<dbReference type="PANTHER" id="PTHR48423">
    <property type="entry name" value="INTERLEUKIN-27 RECEPTOR SUBUNIT ALPHA"/>
    <property type="match status" value="1"/>
</dbReference>
<dbReference type="PANTHER" id="PTHR48423:SF1">
    <property type="entry name" value="INTERLEUKIN-27 RECEPTOR SUBUNIT ALPHA"/>
    <property type="match status" value="1"/>
</dbReference>
<dbReference type="Pfam" id="PF00041">
    <property type="entry name" value="fn3"/>
    <property type="match status" value="2"/>
</dbReference>
<dbReference type="Pfam" id="PF21177">
    <property type="entry name" value="LIF-R_Ig-like"/>
    <property type="match status" value="1"/>
</dbReference>
<dbReference type="Pfam" id="PF17971">
    <property type="entry name" value="LIFR_D2"/>
    <property type="match status" value="1"/>
</dbReference>
<dbReference type="SMART" id="SM00060">
    <property type="entry name" value="FN3"/>
    <property type="match status" value="5"/>
</dbReference>
<dbReference type="SUPFAM" id="SSF49265">
    <property type="entry name" value="Fibronectin type III"/>
    <property type="match status" value="3"/>
</dbReference>
<dbReference type="PROSITE" id="PS50853">
    <property type="entry name" value="FN3"/>
    <property type="match status" value="5"/>
</dbReference>
<dbReference type="PROSITE" id="PS01353">
    <property type="entry name" value="HEMATOPO_REC_L_F2"/>
    <property type="match status" value="1"/>
</dbReference>
<name>OSMR_RAT</name>
<gene>
    <name type="primary">Osmr</name>
    <name type="synonym">Osmrb</name>
</gene>